<feature type="chain" id="PRO_0000235100" description="4-diphosphocytidyl-2-C-methyl-D-erythritol kinase">
    <location>
        <begin position="1"/>
        <end position="285"/>
    </location>
</feature>
<feature type="active site" evidence="1">
    <location>
        <position position="10"/>
    </location>
</feature>
<feature type="active site" evidence="1">
    <location>
        <position position="136"/>
    </location>
</feature>
<feature type="binding site" evidence="1">
    <location>
        <begin position="94"/>
        <end position="104"/>
    </location>
    <ligand>
        <name>ATP</name>
        <dbReference type="ChEBI" id="CHEBI:30616"/>
    </ligand>
</feature>
<reference key="1">
    <citation type="journal article" date="2005" name="Nat. Biotechnol.">
        <title>The complete genome sequence of the meat-borne lactic acid bacterium Lactobacillus sakei 23K.</title>
        <authorList>
            <person name="Chaillou S."/>
            <person name="Champomier-Verges M.-C."/>
            <person name="Cornet M."/>
            <person name="Crutz-Le Coq A.-M."/>
            <person name="Dudez A.-M."/>
            <person name="Martin V."/>
            <person name="Beaufils S."/>
            <person name="Darbon-Rongere E."/>
            <person name="Bossy R."/>
            <person name="Loux V."/>
            <person name="Zagorec M."/>
        </authorList>
    </citation>
    <scope>NUCLEOTIDE SEQUENCE [LARGE SCALE GENOMIC DNA]</scope>
    <source>
        <strain>23K</strain>
    </source>
</reference>
<proteinExistence type="inferred from homology"/>
<organism>
    <name type="scientific">Latilactobacillus sakei subsp. sakei (strain 23K)</name>
    <name type="common">Lactobacillus sakei subsp. sakei</name>
    <dbReference type="NCBI Taxonomy" id="314315"/>
    <lineage>
        <taxon>Bacteria</taxon>
        <taxon>Bacillati</taxon>
        <taxon>Bacillota</taxon>
        <taxon>Bacilli</taxon>
        <taxon>Lactobacillales</taxon>
        <taxon>Lactobacillaceae</taxon>
        <taxon>Latilactobacillus</taxon>
    </lineage>
</organism>
<protein>
    <recommendedName>
        <fullName evidence="1">4-diphosphocytidyl-2-C-methyl-D-erythritol kinase</fullName>
        <shortName evidence="1">CMK</shortName>
        <ecNumber evidence="1">2.7.1.148</ecNumber>
    </recommendedName>
    <alternativeName>
        <fullName evidence="1">4-(cytidine-5'-diphospho)-2-C-methyl-D-erythritol kinase</fullName>
    </alternativeName>
</protein>
<evidence type="ECO:0000255" key="1">
    <source>
        <dbReference type="HAMAP-Rule" id="MF_00061"/>
    </source>
</evidence>
<keyword id="KW-0067">ATP-binding</keyword>
<keyword id="KW-0414">Isoprene biosynthesis</keyword>
<keyword id="KW-0418">Kinase</keyword>
<keyword id="KW-0547">Nucleotide-binding</keyword>
<keyword id="KW-1185">Reference proteome</keyword>
<keyword id="KW-0808">Transferase</keyword>
<gene>
    <name evidence="1" type="primary">ispE</name>
    <name type="ordered locus">LCA_1652</name>
</gene>
<sequence>MQLIEKAPAKINLSLDALYQHTDGEFEWQMIMTSIDLADYVQITLQDSPQIEVRTSKGYLPEDKRNLAYQAAQLLRHRFDIKTGAIIEIDKHIPVAAGLGGGSSDAAAVLRGLNQLWHLGLTEAELAHIGLSIDSDVPYCVYSETALVTGKGDQIQPLGDLPNFWMVVVKPEVSVSTPRILHALNCDQITDRPQTDRLLAGIQQQDAQQMTAAMANVLTPITNQRYPQIDYLMQRLTAFGAEKAQMSGSGPTVFGICRQYSRAQRIYNSMSGFCREVYLVQPLKK</sequence>
<name>ISPE_LATSS</name>
<accession>Q38V25</accession>
<comment type="function">
    <text evidence="1">Catalyzes the phosphorylation of the position 2 hydroxy group of 4-diphosphocytidyl-2C-methyl-D-erythritol.</text>
</comment>
<comment type="catalytic activity">
    <reaction evidence="1">
        <text>4-CDP-2-C-methyl-D-erythritol + ATP = 4-CDP-2-C-methyl-D-erythritol 2-phosphate + ADP + H(+)</text>
        <dbReference type="Rhea" id="RHEA:18437"/>
        <dbReference type="ChEBI" id="CHEBI:15378"/>
        <dbReference type="ChEBI" id="CHEBI:30616"/>
        <dbReference type="ChEBI" id="CHEBI:57823"/>
        <dbReference type="ChEBI" id="CHEBI:57919"/>
        <dbReference type="ChEBI" id="CHEBI:456216"/>
        <dbReference type="EC" id="2.7.1.148"/>
    </reaction>
</comment>
<comment type="pathway">
    <text evidence="1">Isoprenoid biosynthesis; isopentenyl diphosphate biosynthesis via DXP pathway; isopentenyl diphosphate from 1-deoxy-D-xylulose 5-phosphate: step 3/6.</text>
</comment>
<comment type="similarity">
    <text evidence="1">Belongs to the GHMP kinase family. IspE subfamily.</text>
</comment>
<dbReference type="EC" id="2.7.1.148" evidence="1"/>
<dbReference type="EMBL" id="CR936503">
    <property type="protein sequence ID" value="CAI55959.1"/>
    <property type="molecule type" value="Genomic_DNA"/>
</dbReference>
<dbReference type="RefSeq" id="WP_011375344.1">
    <property type="nucleotide sequence ID" value="NC_007576.1"/>
</dbReference>
<dbReference type="SMR" id="Q38V25"/>
<dbReference type="STRING" id="314315.LCA_1652"/>
<dbReference type="KEGG" id="lsa:LCA_1652"/>
<dbReference type="eggNOG" id="COG1947">
    <property type="taxonomic scope" value="Bacteria"/>
</dbReference>
<dbReference type="HOGENOM" id="CLU_053057_1_1_9"/>
<dbReference type="OrthoDB" id="9809438at2"/>
<dbReference type="UniPathway" id="UPA00056">
    <property type="reaction ID" value="UER00094"/>
</dbReference>
<dbReference type="Proteomes" id="UP000002707">
    <property type="component" value="Chromosome"/>
</dbReference>
<dbReference type="GO" id="GO:0050515">
    <property type="term" value="F:4-(cytidine 5'-diphospho)-2-C-methyl-D-erythritol kinase activity"/>
    <property type="evidence" value="ECO:0007669"/>
    <property type="project" value="UniProtKB-UniRule"/>
</dbReference>
<dbReference type="GO" id="GO:0005524">
    <property type="term" value="F:ATP binding"/>
    <property type="evidence" value="ECO:0007669"/>
    <property type="project" value="UniProtKB-UniRule"/>
</dbReference>
<dbReference type="GO" id="GO:0019288">
    <property type="term" value="P:isopentenyl diphosphate biosynthetic process, methylerythritol 4-phosphate pathway"/>
    <property type="evidence" value="ECO:0007669"/>
    <property type="project" value="UniProtKB-UniRule"/>
</dbReference>
<dbReference type="GO" id="GO:0016114">
    <property type="term" value="P:terpenoid biosynthetic process"/>
    <property type="evidence" value="ECO:0007669"/>
    <property type="project" value="InterPro"/>
</dbReference>
<dbReference type="Gene3D" id="3.30.230.10">
    <property type="match status" value="1"/>
</dbReference>
<dbReference type="Gene3D" id="3.30.70.890">
    <property type="entry name" value="GHMP kinase, C-terminal domain"/>
    <property type="match status" value="1"/>
</dbReference>
<dbReference type="HAMAP" id="MF_00061">
    <property type="entry name" value="IspE"/>
    <property type="match status" value="1"/>
</dbReference>
<dbReference type="InterPro" id="IPR013750">
    <property type="entry name" value="GHMP_kinase_C_dom"/>
</dbReference>
<dbReference type="InterPro" id="IPR036554">
    <property type="entry name" value="GHMP_kinase_C_sf"/>
</dbReference>
<dbReference type="InterPro" id="IPR006204">
    <property type="entry name" value="GHMP_kinase_N_dom"/>
</dbReference>
<dbReference type="InterPro" id="IPR004424">
    <property type="entry name" value="IspE"/>
</dbReference>
<dbReference type="InterPro" id="IPR020568">
    <property type="entry name" value="Ribosomal_Su5_D2-typ_SF"/>
</dbReference>
<dbReference type="InterPro" id="IPR014721">
    <property type="entry name" value="Ribsml_uS5_D2-typ_fold_subgr"/>
</dbReference>
<dbReference type="NCBIfam" id="TIGR00154">
    <property type="entry name" value="ispE"/>
    <property type="match status" value="1"/>
</dbReference>
<dbReference type="PANTHER" id="PTHR43527">
    <property type="entry name" value="4-DIPHOSPHOCYTIDYL-2-C-METHYL-D-ERYTHRITOL KINASE, CHLOROPLASTIC"/>
    <property type="match status" value="1"/>
</dbReference>
<dbReference type="PANTHER" id="PTHR43527:SF2">
    <property type="entry name" value="4-DIPHOSPHOCYTIDYL-2-C-METHYL-D-ERYTHRITOL KINASE, CHLOROPLASTIC"/>
    <property type="match status" value="1"/>
</dbReference>
<dbReference type="Pfam" id="PF08544">
    <property type="entry name" value="GHMP_kinases_C"/>
    <property type="match status" value="1"/>
</dbReference>
<dbReference type="Pfam" id="PF00288">
    <property type="entry name" value="GHMP_kinases_N"/>
    <property type="match status" value="1"/>
</dbReference>
<dbReference type="PIRSF" id="PIRSF010376">
    <property type="entry name" value="IspE"/>
    <property type="match status" value="1"/>
</dbReference>
<dbReference type="SUPFAM" id="SSF55060">
    <property type="entry name" value="GHMP Kinase, C-terminal domain"/>
    <property type="match status" value="1"/>
</dbReference>
<dbReference type="SUPFAM" id="SSF54211">
    <property type="entry name" value="Ribosomal protein S5 domain 2-like"/>
    <property type="match status" value="1"/>
</dbReference>